<comment type="function">
    <text evidence="1">Binds the lower part of the 30S subunit head. Binds mRNA in the 70S ribosome, positioning it for translation.</text>
</comment>
<comment type="subunit">
    <text evidence="1">Part of the 30S ribosomal subunit. Forms a tight complex with proteins S10 and S14.</text>
</comment>
<comment type="similarity">
    <text evidence="1">Belongs to the universal ribosomal protein uS3 family.</text>
</comment>
<feature type="chain" id="PRO_1000086103" description="Small ribosomal subunit protein uS3">
    <location>
        <begin position="1"/>
        <end position="243"/>
    </location>
</feature>
<feature type="domain" description="KH type-2" evidence="1">
    <location>
        <begin position="39"/>
        <end position="107"/>
    </location>
</feature>
<feature type="region of interest" description="Disordered" evidence="2">
    <location>
        <begin position="212"/>
        <end position="243"/>
    </location>
</feature>
<sequence>MGRKVHPIGFRLGYIKDWQSKWFAEGEEYTRQLHEDIELRKLISKELQSAGVSRIEIERSANKIEISVYTAKPGIVIGKRGTNVDTLKSALERKTGKKIKLNIKEIHQPELDAQLVAESIGEQITRRVSYKRAMKQAVQRAMRLGAQGVKVRCSGRLGGAEMSRVHEEAEGRVPRHTLRADIDYAQVHAHTTYGRIGVKVWIYKGEVFPNQVAKSPAEPATTAPTPAPERRERQPRRNSNASA</sequence>
<protein>
    <recommendedName>
        <fullName evidence="1">Small ribosomal subunit protein uS3</fullName>
    </recommendedName>
    <alternativeName>
        <fullName evidence="3">30S ribosomal protein S3</fullName>
    </alternativeName>
</protein>
<organism>
    <name type="scientific">Chloroflexus aurantiacus (strain ATCC 29366 / DSM 635 / J-10-fl)</name>
    <dbReference type="NCBI Taxonomy" id="324602"/>
    <lineage>
        <taxon>Bacteria</taxon>
        <taxon>Bacillati</taxon>
        <taxon>Chloroflexota</taxon>
        <taxon>Chloroflexia</taxon>
        <taxon>Chloroflexales</taxon>
        <taxon>Chloroflexineae</taxon>
        <taxon>Chloroflexaceae</taxon>
        <taxon>Chloroflexus</taxon>
    </lineage>
</organism>
<evidence type="ECO:0000255" key="1">
    <source>
        <dbReference type="HAMAP-Rule" id="MF_01309"/>
    </source>
</evidence>
<evidence type="ECO:0000256" key="2">
    <source>
        <dbReference type="SAM" id="MobiDB-lite"/>
    </source>
</evidence>
<evidence type="ECO:0000305" key="3"/>
<name>RS3_CHLAA</name>
<reference key="1">
    <citation type="journal article" date="2011" name="BMC Genomics">
        <title>Complete genome sequence of the filamentous anoxygenic phototrophic bacterium Chloroflexus aurantiacus.</title>
        <authorList>
            <person name="Tang K.H."/>
            <person name="Barry K."/>
            <person name="Chertkov O."/>
            <person name="Dalin E."/>
            <person name="Han C.S."/>
            <person name="Hauser L.J."/>
            <person name="Honchak B.M."/>
            <person name="Karbach L.E."/>
            <person name="Land M.L."/>
            <person name="Lapidus A."/>
            <person name="Larimer F.W."/>
            <person name="Mikhailova N."/>
            <person name="Pitluck S."/>
            <person name="Pierson B.K."/>
            <person name="Blankenship R.E."/>
        </authorList>
    </citation>
    <scope>NUCLEOTIDE SEQUENCE [LARGE SCALE GENOMIC DNA]</scope>
    <source>
        <strain>ATCC 29366 / DSM 635 / J-10-fl</strain>
    </source>
</reference>
<accession>A9WH72</accession>
<gene>
    <name evidence="1" type="primary">rpsC</name>
    <name type="ordered locus">Caur_2375</name>
</gene>
<dbReference type="EMBL" id="CP000909">
    <property type="protein sequence ID" value="ABY35584.1"/>
    <property type="molecule type" value="Genomic_DNA"/>
</dbReference>
<dbReference type="RefSeq" id="WP_012258237.1">
    <property type="nucleotide sequence ID" value="NC_010175.1"/>
</dbReference>
<dbReference type="RefSeq" id="YP_001635973.1">
    <property type="nucleotide sequence ID" value="NC_010175.1"/>
</dbReference>
<dbReference type="SMR" id="A9WH72"/>
<dbReference type="FunCoup" id="A9WH72">
    <property type="interactions" value="519"/>
</dbReference>
<dbReference type="STRING" id="324602.Caur_2375"/>
<dbReference type="EnsemblBacteria" id="ABY35584">
    <property type="protein sequence ID" value="ABY35584"/>
    <property type="gene ID" value="Caur_2375"/>
</dbReference>
<dbReference type="KEGG" id="cau:Caur_2375"/>
<dbReference type="PATRIC" id="fig|324602.8.peg.2689"/>
<dbReference type="eggNOG" id="COG0092">
    <property type="taxonomic scope" value="Bacteria"/>
</dbReference>
<dbReference type="HOGENOM" id="CLU_058591_0_2_0"/>
<dbReference type="InParanoid" id="A9WH72"/>
<dbReference type="Proteomes" id="UP000002008">
    <property type="component" value="Chromosome"/>
</dbReference>
<dbReference type="GO" id="GO:0022627">
    <property type="term" value="C:cytosolic small ribosomal subunit"/>
    <property type="evidence" value="ECO:0000318"/>
    <property type="project" value="GO_Central"/>
</dbReference>
<dbReference type="GO" id="GO:0003729">
    <property type="term" value="F:mRNA binding"/>
    <property type="evidence" value="ECO:0007669"/>
    <property type="project" value="UniProtKB-UniRule"/>
</dbReference>
<dbReference type="GO" id="GO:0019843">
    <property type="term" value="F:rRNA binding"/>
    <property type="evidence" value="ECO:0007669"/>
    <property type="project" value="UniProtKB-UniRule"/>
</dbReference>
<dbReference type="GO" id="GO:0003735">
    <property type="term" value="F:structural constituent of ribosome"/>
    <property type="evidence" value="ECO:0000318"/>
    <property type="project" value="GO_Central"/>
</dbReference>
<dbReference type="GO" id="GO:0006412">
    <property type="term" value="P:translation"/>
    <property type="evidence" value="ECO:0007669"/>
    <property type="project" value="UniProtKB-UniRule"/>
</dbReference>
<dbReference type="CDD" id="cd02412">
    <property type="entry name" value="KH-II_30S_S3"/>
    <property type="match status" value="1"/>
</dbReference>
<dbReference type="FunFam" id="3.30.1140.32:FF:000014">
    <property type="entry name" value="30S ribosomal protein S3"/>
    <property type="match status" value="1"/>
</dbReference>
<dbReference type="FunFam" id="3.30.300.20:FF:000001">
    <property type="entry name" value="30S ribosomal protein S3"/>
    <property type="match status" value="1"/>
</dbReference>
<dbReference type="Gene3D" id="3.30.300.20">
    <property type="match status" value="1"/>
</dbReference>
<dbReference type="Gene3D" id="3.30.1140.32">
    <property type="entry name" value="Ribosomal protein S3, C-terminal domain"/>
    <property type="match status" value="1"/>
</dbReference>
<dbReference type="HAMAP" id="MF_01309_B">
    <property type="entry name" value="Ribosomal_uS3_B"/>
    <property type="match status" value="1"/>
</dbReference>
<dbReference type="InterPro" id="IPR004087">
    <property type="entry name" value="KH_dom"/>
</dbReference>
<dbReference type="InterPro" id="IPR015946">
    <property type="entry name" value="KH_dom-like_a/b"/>
</dbReference>
<dbReference type="InterPro" id="IPR004044">
    <property type="entry name" value="KH_dom_type_2"/>
</dbReference>
<dbReference type="InterPro" id="IPR009019">
    <property type="entry name" value="KH_sf_prok-type"/>
</dbReference>
<dbReference type="InterPro" id="IPR036419">
    <property type="entry name" value="Ribosomal_S3_C_sf"/>
</dbReference>
<dbReference type="InterPro" id="IPR005704">
    <property type="entry name" value="Ribosomal_uS3_bac-typ"/>
</dbReference>
<dbReference type="InterPro" id="IPR001351">
    <property type="entry name" value="Ribosomal_uS3_C"/>
</dbReference>
<dbReference type="InterPro" id="IPR018280">
    <property type="entry name" value="Ribosomal_uS3_CS"/>
</dbReference>
<dbReference type="NCBIfam" id="TIGR01009">
    <property type="entry name" value="rpsC_bact"/>
    <property type="match status" value="1"/>
</dbReference>
<dbReference type="PANTHER" id="PTHR11760">
    <property type="entry name" value="30S/40S RIBOSOMAL PROTEIN S3"/>
    <property type="match status" value="1"/>
</dbReference>
<dbReference type="PANTHER" id="PTHR11760:SF19">
    <property type="entry name" value="SMALL RIBOSOMAL SUBUNIT PROTEIN US3C"/>
    <property type="match status" value="1"/>
</dbReference>
<dbReference type="Pfam" id="PF07650">
    <property type="entry name" value="KH_2"/>
    <property type="match status" value="1"/>
</dbReference>
<dbReference type="Pfam" id="PF00189">
    <property type="entry name" value="Ribosomal_S3_C"/>
    <property type="match status" value="1"/>
</dbReference>
<dbReference type="SMART" id="SM00322">
    <property type="entry name" value="KH"/>
    <property type="match status" value="1"/>
</dbReference>
<dbReference type="SUPFAM" id="SSF54814">
    <property type="entry name" value="Prokaryotic type KH domain (KH-domain type II)"/>
    <property type="match status" value="1"/>
</dbReference>
<dbReference type="SUPFAM" id="SSF54821">
    <property type="entry name" value="Ribosomal protein S3 C-terminal domain"/>
    <property type="match status" value="1"/>
</dbReference>
<dbReference type="PROSITE" id="PS50823">
    <property type="entry name" value="KH_TYPE_2"/>
    <property type="match status" value="1"/>
</dbReference>
<dbReference type="PROSITE" id="PS00548">
    <property type="entry name" value="RIBOSOMAL_S3"/>
    <property type="match status" value="1"/>
</dbReference>
<keyword id="KW-1185">Reference proteome</keyword>
<keyword id="KW-0687">Ribonucleoprotein</keyword>
<keyword id="KW-0689">Ribosomal protein</keyword>
<keyword id="KW-0694">RNA-binding</keyword>
<keyword id="KW-0699">rRNA-binding</keyword>
<proteinExistence type="inferred from homology"/>